<comment type="subcellular location">
    <subcellularLocation>
        <location evidence="4">Secreted</location>
    </subcellularLocation>
</comment>
<comment type="tissue specificity">
    <text evidence="4">Expressed by the venom duct.</text>
</comment>
<comment type="domain">
    <text evidence="1">The presence of a 'disulfide through disulfide knot' structurally defines this protein as a knottin.</text>
</comment>
<comment type="domain">
    <text evidence="3">The cysteine framework is VI/VII (C-C-CC-C-C).</text>
</comment>
<comment type="similarity">
    <text evidence="3">Belongs to the conotoxin I3 superfamily.</text>
</comment>
<evidence type="ECO:0000250" key="1"/>
<evidence type="ECO:0000255" key="2"/>
<evidence type="ECO:0000305" key="3"/>
<evidence type="ECO:0000305" key="4">
    <source>
    </source>
</evidence>
<keyword id="KW-1015">Disulfide bond</keyword>
<keyword id="KW-0960">Knottin</keyword>
<keyword id="KW-0964">Secreted</keyword>
<keyword id="KW-0732">Signal</keyword>
<keyword id="KW-0800">Toxin</keyword>
<protein>
    <recommendedName>
        <fullName>Conotoxin Pu6.1</fullName>
    </recommendedName>
</protein>
<feature type="signal peptide" evidence="2">
    <location>
        <begin position="1"/>
        <end position="19"/>
    </location>
</feature>
<feature type="propeptide" id="PRO_0000392160" evidence="2">
    <location>
        <begin position="20"/>
        <end position="42"/>
    </location>
</feature>
<feature type="peptide" id="PRO_0000392161" description="Conotoxin Pu6.1">
    <location>
        <begin position="43"/>
        <end position="83"/>
    </location>
</feature>
<feature type="disulfide bond" evidence="1">
    <location>
        <begin position="43"/>
        <end position="57"/>
    </location>
</feature>
<feature type="disulfide bond" evidence="1">
    <location>
        <begin position="50"/>
        <end position="62"/>
    </location>
</feature>
<feature type="disulfide bond" evidence="1">
    <location>
        <begin position="56"/>
        <end position="78"/>
    </location>
</feature>
<accession>D2DGD8</accession>
<proteinExistence type="inferred from homology"/>
<sequence>MKLVLAIVLILMLVSLSTGAEESGQEISMVGPPLYIWDPIPPCKQLDEDCGYGYSCCEDLSCQPLIEPDTMEITALVCQIESA</sequence>
<organism>
    <name type="scientific">Conus pulicarius</name>
    <name type="common">Flea-bitten cone</name>
    <dbReference type="NCBI Taxonomy" id="93154"/>
    <lineage>
        <taxon>Eukaryota</taxon>
        <taxon>Metazoa</taxon>
        <taxon>Spiralia</taxon>
        <taxon>Lophotrochozoa</taxon>
        <taxon>Mollusca</taxon>
        <taxon>Gastropoda</taxon>
        <taxon>Caenogastropoda</taxon>
        <taxon>Neogastropoda</taxon>
        <taxon>Conoidea</taxon>
        <taxon>Conidae</taxon>
        <taxon>Conus</taxon>
    </lineage>
</organism>
<name>I361_CONPL</name>
<reference key="1">
    <citation type="journal article" date="2009" name="Peptides">
        <title>New conotoxins define the novel I3-superfamily.</title>
        <authorList>
            <person name="Yuan D.D."/>
            <person name="Liu L."/>
            <person name="Shao X.X."/>
            <person name="Peng C."/>
            <person name="Chi C.W."/>
            <person name="Guo Z.Y."/>
        </authorList>
    </citation>
    <scope>NUCLEOTIDE SEQUENCE [MRNA]</scope>
</reference>
<dbReference type="EMBL" id="FJ531699">
    <property type="protein sequence ID" value="ACU30045.1"/>
    <property type="molecule type" value="mRNA"/>
</dbReference>
<dbReference type="GO" id="GO:0005576">
    <property type="term" value="C:extracellular region"/>
    <property type="evidence" value="ECO:0007669"/>
    <property type="project" value="UniProtKB-SubCell"/>
</dbReference>
<dbReference type="GO" id="GO:0090729">
    <property type="term" value="F:toxin activity"/>
    <property type="evidence" value="ECO:0007669"/>
    <property type="project" value="UniProtKB-KW"/>
</dbReference>